<protein>
    <recommendedName>
        <fullName evidence="1">Protein GrpE</fullName>
    </recommendedName>
    <alternativeName>
        <fullName evidence="1">HSP-70 cofactor</fullName>
    </alternativeName>
</protein>
<sequence length="174" mass="19969">MAQDIKNEEVEEVQEEEVVETAEETTPEKSELDLANERADEFENKYLRAHAEMQNIQRRANEERQNLQRYRSQDLAKAILPSLDNLERALAVEGLTDDVKKGLGMVQESLIHALKEEGIEEIAADGEFDHNYHMAIQTLPADDEHPVDTIAQVFQKGYKLHDRILRPAMVVVYN</sequence>
<proteinExistence type="inferred from homology"/>
<evidence type="ECO:0000255" key="1">
    <source>
        <dbReference type="HAMAP-Rule" id="MF_01151"/>
    </source>
</evidence>
<evidence type="ECO:0000256" key="2">
    <source>
        <dbReference type="SAM" id="MobiDB-lite"/>
    </source>
</evidence>
<dbReference type="EMBL" id="CP000921">
    <property type="protein sequence ID" value="ACO22240.1"/>
    <property type="molecule type" value="Genomic_DNA"/>
</dbReference>
<dbReference type="RefSeq" id="WP_000046031.1">
    <property type="nucleotide sequence ID" value="NC_012469.1"/>
</dbReference>
<dbReference type="SMR" id="C1CQ17"/>
<dbReference type="GeneID" id="45654056"/>
<dbReference type="KEGG" id="snt:SPT_0549"/>
<dbReference type="HOGENOM" id="CLU_057217_6_3_9"/>
<dbReference type="GO" id="GO:0005737">
    <property type="term" value="C:cytoplasm"/>
    <property type="evidence" value="ECO:0007669"/>
    <property type="project" value="UniProtKB-SubCell"/>
</dbReference>
<dbReference type="GO" id="GO:0000774">
    <property type="term" value="F:adenyl-nucleotide exchange factor activity"/>
    <property type="evidence" value="ECO:0007669"/>
    <property type="project" value="InterPro"/>
</dbReference>
<dbReference type="GO" id="GO:0042803">
    <property type="term" value="F:protein homodimerization activity"/>
    <property type="evidence" value="ECO:0007669"/>
    <property type="project" value="InterPro"/>
</dbReference>
<dbReference type="GO" id="GO:0051087">
    <property type="term" value="F:protein-folding chaperone binding"/>
    <property type="evidence" value="ECO:0007669"/>
    <property type="project" value="InterPro"/>
</dbReference>
<dbReference type="GO" id="GO:0051082">
    <property type="term" value="F:unfolded protein binding"/>
    <property type="evidence" value="ECO:0007669"/>
    <property type="project" value="TreeGrafter"/>
</dbReference>
<dbReference type="GO" id="GO:0006457">
    <property type="term" value="P:protein folding"/>
    <property type="evidence" value="ECO:0007669"/>
    <property type="project" value="InterPro"/>
</dbReference>
<dbReference type="CDD" id="cd00446">
    <property type="entry name" value="GrpE"/>
    <property type="match status" value="1"/>
</dbReference>
<dbReference type="FunFam" id="2.30.22.10:FF:000004">
    <property type="entry name" value="Protein GrpE"/>
    <property type="match status" value="1"/>
</dbReference>
<dbReference type="FunFam" id="3.90.20.20:FF:000007">
    <property type="entry name" value="Protein GrpE"/>
    <property type="match status" value="1"/>
</dbReference>
<dbReference type="Gene3D" id="3.90.20.20">
    <property type="match status" value="1"/>
</dbReference>
<dbReference type="Gene3D" id="2.30.22.10">
    <property type="entry name" value="Head domain of nucleotide exchange factor GrpE"/>
    <property type="match status" value="1"/>
</dbReference>
<dbReference type="HAMAP" id="MF_01151">
    <property type="entry name" value="GrpE"/>
    <property type="match status" value="1"/>
</dbReference>
<dbReference type="InterPro" id="IPR000740">
    <property type="entry name" value="GrpE"/>
</dbReference>
<dbReference type="InterPro" id="IPR013805">
    <property type="entry name" value="GrpE_coiled_coil"/>
</dbReference>
<dbReference type="InterPro" id="IPR009012">
    <property type="entry name" value="GrpE_head"/>
</dbReference>
<dbReference type="NCBIfam" id="NF010738">
    <property type="entry name" value="PRK14140.1"/>
    <property type="match status" value="1"/>
</dbReference>
<dbReference type="NCBIfam" id="NF010753">
    <property type="entry name" value="PRK14156.1"/>
    <property type="match status" value="1"/>
</dbReference>
<dbReference type="NCBIfam" id="NF010759">
    <property type="entry name" value="PRK14162.1"/>
    <property type="match status" value="1"/>
</dbReference>
<dbReference type="PANTHER" id="PTHR21237">
    <property type="entry name" value="GRPE PROTEIN"/>
    <property type="match status" value="1"/>
</dbReference>
<dbReference type="PANTHER" id="PTHR21237:SF23">
    <property type="entry name" value="GRPE PROTEIN HOMOLOG, MITOCHONDRIAL"/>
    <property type="match status" value="1"/>
</dbReference>
<dbReference type="Pfam" id="PF01025">
    <property type="entry name" value="GrpE"/>
    <property type="match status" value="1"/>
</dbReference>
<dbReference type="PRINTS" id="PR00773">
    <property type="entry name" value="GRPEPROTEIN"/>
</dbReference>
<dbReference type="SUPFAM" id="SSF58014">
    <property type="entry name" value="Coiled-coil domain of nucleotide exchange factor GrpE"/>
    <property type="match status" value="1"/>
</dbReference>
<dbReference type="SUPFAM" id="SSF51064">
    <property type="entry name" value="Head domain of nucleotide exchange factor GrpE"/>
    <property type="match status" value="1"/>
</dbReference>
<dbReference type="PROSITE" id="PS01071">
    <property type="entry name" value="GRPE"/>
    <property type="match status" value="1"/>
</dbReference>
<keyword id="KW-0143">Chaperone</keyword>
<keyword id="KW-0963">Cytoplasm</keyword>
<keyword id="KW-0346">Stress response</keyword>
<reference key="1">
    <citation type="journal article" date="2010" name="Genome Biol.">
        <title>Structure and dynamics of the pan-genome of Streptococcus pneumoniae and closely related species.</title>
        <authorList>
            <person name="Donati C."/>
            <person name="Hiller N.L."/>
            <person name="Tettelin H."/>
            <person name="Muzzi A."/>
            <person name="Croucher N.J."/>
            <person name="Angiuoli S.V."/>
            <person name="Oggioni M."/>
            <person name="Dunning Hotopp J.C."/>
            <person name="Hu F.Z."/>
            <person name="Riley D.R."/>
            <person name="Covacci A."/>
            <person name="Mitchell T.J."/>
            <person name="Bentley S.D."/>
            <person name="Kilian M."/>
            <person name="Ehrlich G.D."/>
            <person name="Rappuoli R."/>
            <person name="Moxon E.R."/>
            <person name="Masignani V."/>
        </authorList>
    </citation>
    <scope>NUCLEOTIDE SEQUENCE [LARGE SCALE GENOMIC DNA]</scope>
    <source>
        <strain>Taiwan19F-14</strain>
    </source>
</reference>
<feature type="chain" id="PRO_1000164222" description="Protein GrpE">
    <location>
        <begin position="1"/>
        <end position="174"/>
    </location>
</feature>
<feature type="region of interest" description="Disordered" evidence="2">
    <location>
        <begin position="1"/>
        <end position="35"/>
    </location>
</feature>
<feature type="compositionally biased region" description="Acidic residues" evidence="2">
    <location>
        <begin position="9"/>
        <end position="25"/>
    </location>
</feature>
<feature type="compositionally biased region" description="Basic and acidic residues" evidence="2">
    <location>
        <begin position="26"/>
        <end position="35"/>
    </location>
</feature>
<comment type="function">
    <text evidence="1">Participates actively in the response to hyperosmotic and heat shock by preventing the aggregation of stress-denatured proteins, in association with DnaK and GrpE. It is the nucleotide exchange factor for DnaK and may function as a thermosensor. Unfolded proteins bind initially to DnaJ; upon interaction with the DnaJ-bound protein, DnaK hydrolyzes its bound ATP, resulting in the formation of a stable complex. GrpE releases ADP from DnaK; ATP binding to DnaK triggers the release of the substrate protein, thus completing the reaction cycle. Several rounds of ATP-dependent interactions between DnaJ, DnaK and GrpE are required for fully efficient folding.</text>
</comment>
<comment type="subunit">
    <text evidence="1">Homodimer.</text>
</comment>
<comment type="subcellular location">
    <subcellularLocation>
        <location evidence="1">Cytoplasm</location>
    </subcellularLocation>
</comment>
<comment type="similarity">
    <text evidence="1">Belongs to the GrpE family.</text>
</comment>
<accession>C1CQ17</accession>
<organism>
    <name type="scientific">Streptococcus pneumoniae (strain Taiwan19F-14)</name>
    <dbReference type="NCBI Taxonomy" id="487213"/>
    <lineage>
        <taxon>Bacteria</taxon>
        <taxon>Bacillati</taxon>
        <taxon>Bacillota</taxon>
        <taxon>Bacilli</taxon>
        <taxon>Lactobacillales</taxon>
        <taxon>Streptococcaceae</taxon>
        <taxon>Streptococcus</taxon>
    </lineage>
</organism>
<name>GRPE_STRZT</name>
<gene>
    <name evidence="1" type="primary">grpE</name>
    <name type="ordered locus">SPT_0549</name>
</gene>